<feature type="chain" id="PRO_1000125182" description="Sec-independent protein translocase protein TatA">
    <location>
        <begin position="1"/>
        <end position="82"/>
    </location>
</feature>
<feature type="transmembrane region" description="Helical" evidence="1">
    <location>
        <begin position="1"/>
        <end position="21"/>
    </location>
</feature>
<feature type="region of interest" description="Disordered" evidence="2">
    <location>
        <begin position="48"/>
        <end position="82"/>
    </location>
</feature>
<protein>
    <recommendedName>
        <fullName evidence="1">Sec-independent protein translocase protein TatA</fullName>
    </recommendedName>
</protein>
<sequence>MGGISIWQLLIIAVIIVLLFGTKKLRGVGSDLGSAVKGFKKAISEDESAKDAKKDADFVPQNLEKKEAETVEKQKQNDKEQA</sequence>
<accession>B6EHA7</accession>
<comment type="function">
    <text evidence="1">Part of the twin-arginine translocation (Tat) system that transports large folded proteins containing a characteristic twin-arginine motif in their signal peptide across membranes. TatA could form the protein-conducting channel of the Tat system.</text>
</comment>
<comment type="subunit">
    <text evidence="1">The Tat system comprises two distinct complexes: a TatABC complex, containing multiple copies of TatA, TatB and TatC subunits, and a separate TatA complex, containing only TatA subunits. Substrates initially bind to the TatABC complex, which probably triggers association of the separate TatA complex to form the active translocon.</text>
</comment>
<comment type="subcellular location">
    <subcellularLocation>
        <location evidence="1">Cell inner membrane</location>
        <topology evidence="1">Single-pass membrane protein</topology>
    </subcellularLocation>
</comment>
<comment type="similarity">
    <text evidence="1">Belongs to the TatA/E family.</text>
</comment>
<reference key="1">
    <citation type="journal article" date="2008" name="BMC Genomics">
        <title>The genome sequence of the fish pathogen Aliivibrio salmonicida strain LFI1238 shows extensive evidence of gene decay.</title>
        <authorList>
            <person name="Hjerde E."/>
            <person name="Lorentzen M.S."/>
            <person name="Holden M.T."/>
            <person name="Seeger K."/>
            <person name="Paulsen S."/>
            <person name="Bason N."/>
            <person name="Churcher C."/>
            <person name="Harris D."/>
            <person name="Norbertczak H."/>
            <person name="Quail M.A."/>
            <person name="Sanders S."/>
            <person name="Thurston S."/>
            <person name="Parkhill J."/>
            <person name="Willassen N.P."/>
            <person name="Thomson N.R."/>
        </authorList>
    </citation>
    <scope>NUCLEOTIDE SEQUENCE [LARGE SCALE GENOMIC DNA]</scope>
    <source>
        <strain>LFI1238</strain>
    </source>
</reference>
<keyword id="KW-0997">Cell inner membrane</keyword>
<keyword id="KW-1003">Cell membrane</keyword>
<keyword id="KW-0472">Membrane</keyword>
<keyword id="KW-0653">Protein transport</keyword>
<keyword id="KW-0811">Translocation</keyword>
<keyword id="KW-0812">Transmembrane</keyword>
<keyword id="KW-1133">Transmembrane helix</keyword>
<keyword id="KW-0813">Transport</keyword>
<organism>
    <name type="scientific">Aliivibrio salmonicida (strain LFI1238)</name>
    <name type="common">Vibrio salmonicida (strain LFI1238)</name>
    <dbReference type="NCBI Taxonomy" id="316275"/>
    <lineage>
        <taxon>Bacteria</taxon>
        <taxon>Pseudomonadati</taxon>
        <taxon>Pseudomonadota</taxon>
        <taxon>Gammaproteobacteria</taxon>
        <taxon>Vibrionales</taxon>
        <taxon>Vibrionaceae</taxon>
        <taxon>Aliivibrio</taxon>
    </lineage>
</organism>
<gene>
    <name evidence="1" type="primary">tatA</name>
    <name type="ordered locus">VSAL_I2999</name>
</gene>
<proteinExistence type="inferred from homology"/>
<name>TATA_ALISL</name>
<dbReference type="EMBL" id="FM178379">
    <property type="protein sequence ID" value="CAQ80683.1"/>
    <property type="molecule type" value="Genomic_DNA"/>
</dbReference>
<dbReference type="RefSeq" id="WP_012551400.1">
    <property type="nucleotide sequence ID" value="NC_011312.1"/>
</dbReference>
<dbReference type="SMR" id="B6EHA7"/>
<dbReference type="KEGG" id="vsa:VSAL_I2999"/>
<dbReference type="eggNOG" id="COG1826">
    <property type="taxonomic scope" value="Bacteria"/>
</dbReference>
<dbReference type="HOGENOM" id="CLU_086034_5_1_6"/>
<dbReference type="Proteomes" id="UP000001730">
    <property type="component" value="Chromosome 1"/>
</dbReference>
<dbReference type="GO" id="GO:0033281">
    <property type="term" value="C:TAT protein transport complex"/>
    <property type="evidence" value="ECO:0007669"/>
    <property type="project" value="UniProtKB-UniRule"/>
</dbReference>
<dbReference type="GO" id="GO:0008320">
    <property type="term" value="F:protein transmembrane transporter activity"/>
    <property type="evidence" value="ECO:0007669"/>
    <property type="project" value="UniProtKB-UniRule"/>
</dbReference>
<dbReference type="GO" id="GO:0043953">
    <property type="term" value="P:protein transport by the Tat complex"/>
    <property type="evidence" value="ECO:0007669"/>
    <property type="project" value="UniProtKB-UniRule"/>
</dbReference>
<dbReference type="Gene3D" id="1.20.5.3310">
    <property type="match status" value="1"/>
</dbReference>
<dbReference type="HAMAP" id="MF_00236">
    <property type="entry name" value="TatA_E"/>
    <property type="match status" value="1"/>
</dbReference>
<dbReference type="InterPro" id="IPR003369">
    <property type="entry name" value="TatA/B/E"/>
</dbReference>
<dbReference type="InterPro" id="IPR006312">
    <property type="entry name" value="TatA/E"/>
</dbReference>
<dbReference type="NCBIfam" id="NF002813">
    <property type="entry name" value="PRK02958.1"/>
    <property type="match status" value="1"/>
</dbReference>
<dbReference type="NCBIfam" id="NF003396">
    <property type="entry name" value="PRK04598.1"/>
    <property type="match status" value="1"/>
</dbReference>
<dbReference type="NCBIfam" id="TIGR01411">
    <property type="entry name" value="tatAE"/>
    <property type="match status" value="1"/>
</dbReference>
<dbReference type="PANTHER" id="PTHR42982">
    <property type="entry name" value="SEC-INDEPENDENT PROTEIN TRANSLOCASE PROTEIN TATA"/>
    <property type="match status" value="1"/>
</dbReference>
<dbReference type="PANTHER" id="PTHR42982:SF1">
    <property type="entry name" value="SEC-INDEPENDENT PROTEIN TRANSLOCASE PROTEIN TATA"/>
    <property type="match status" value="1"/>
</dbReference>
<dbReference type="Pfam" id="PF02416">
    <property type="entry name" value="TatA_B_E"/>
    <property type="match status" value="1"/>
</dbReference>
<evidence type="ECO:0000255" key="1">
    <source>
        <dbReference type="HAMAP-Rule" id="MF_00236"/>
    </source>
</evidence>
<evidence type="ECO:0000256" key="2">
    <source>
        <dbReference type="SAM" id="MobiDB-lite"/>
    </source>
</evidence>